<keyword id="KW-0472">Membrane</keyword>
<keyword id="KW-0496">Mitochondrion</keyword>
<keyword id="KW-1185">Reference proteome</keyword>
<keyword id="KW-0812">Transmembrane</keyword>
<keyword id="KW-1133">Transmembrane helix</keyword>
<reference key="1">
    <citation type="journal article" date="1997" name="Nat. Genet.">
        <title>The mitochondrial genome of Arabidopsis thaliana contains 57 genes in 366,924 nucleotides.</title>
        <authorList>
            <person name="Unseld M."/>
            <person name="Marienfeld J.R."/>
            <person name="Brandt P."/>
            <person name="Brennicke A."/>
        </authorList>
    </citation>
    <scope>NUCLEOTIDE SEQUENCE [LARGE SCALE GENOMIC DNA]</scope>
    <source>
        <strain>cv. C24</strain>
    </source>
</reference>
<reference key="2">
    <citation type="journal article" date="2018" name="Plant Cell">
        <title>Correction of persistent errors in Arabidopsis reference mitochondrial genomes.</title>
        <authorList>
            <person name="Sloan D.B."/>
            <person name="Wu Z."/>
            <person name="Sharbrough J."/>
        </authorList>
    </citation>
    <scope>NUCLEOTIDE SEQUENCE [LARGE SCALE GENOMIC DNA]</scope>
    <source>
        <strain>cv. Columbia</strain>
    </source>
</reference>
<reference key="3">
    <citation type="journal article" date="1999" name="Nature">
        <title>Sequence and analysis of chromosome 2 of the plant Arabidopsis thaliana.</title>
        <authorList>
            <person name="Lin X."/>
            <person name="Kaul S."/>
            <person name="Rounsley S.D."/>
            <person name="Shea T.P."/>
            <person name="Benito M.-I."/>
            <person name="Town C.D."/>
            <person name="Fujii C.Y."/>
            <person name="Mason T.M."/>
            <person name="Bowman C.L."/>
            <person name="Barnstead M.E."/>
            <person name="Feldblyum T.V."/>
            <person name="Buell C.R."/>
            <person name="Ketchum K.A."/>
            <person name="Lee J.J."/>
            <person name="Ronning C.M."/>
            <person name="Koo H.L."/>
            <person name="Moffat K.S."/>
            <person name="Cronin L.A."/>
            <person name="Shen M."/>
            <person name="Pai G."/>
            <person name="Van Aken S."/>
            <person name="Umayam L."/>
            <person name="Tallon L.J."/>
            <person name="Gill J.E."/>
            <person name="Adams M.D."/>
            <person name="Carrera A.J."/>
            <person name="Creasy T.H."/>
            <person name="Goodman H.M."/>
            <person name="Somerville C.R."/>
            <person name="Copenhaver G.P."/>
            <person name="Preuss D."/>
            <person name="Nierman W.C."/>
            <person name="White O."/>
            <person name="Eisen J.A."/>
            <person name="Salzberg S.L."/>
            <person name="Fraser C.M."/>
            <person name="Venter J.C."/>
        </authorList>
    </citation>
    <scope>NUCLEOTIDE SEQUENCE [LARGE SCALE GENOMIC DNA] (AT2G07722)</scope>
    <source>
        <strain>cv. Columbia</strain>
    </source>
</reference>
<reference key="4">
    <citation type="journal article" date="2017" name="Plant J.">
        <title>Araport11: a complete reannotation of the Arabidopsis thaliana reference genome.</title>
        <authorList>
            <person name="Cheng C.Y."/>
            <person name="Krishnakumar V."/>
            <person name="Chan A.P."/>
            <person name="Thibaud-Nissen F."/>
            <person name="Schobel S."/>
            <person name="Town C.D."/>
        </authorList>
    </citation>
    <scope>GENOME REANNOTATION</scope>
    <scope>SEQUENCE REVISION (AT2G07722)</scope>
    <source>
        <strain>cv. Columbia</strain>
    </source>
</reference>
<reference key="5">
    <citation type="journal article" date="2006" name="Plant Biotechnol. J.">
        <title>Simultaneous high-throughput recombinational cloning of open reading frames in closed and open configurations.</title>
        <authorList>
            <person name="Underwood B.A."/>
            <person name="Vanderhaeghen R."/>
            <person name="Whitford R."/>
            <person name="Town C.D."/>
            <person name="Hilson P."/>
        </authorList>
    </citation>
    <scope>NUCLEOTIDE SEQUENCE [LARGE SCALE GENOMIC DNA] (AT2G07722)</scope>
    <source>
        <strain>cv. Columbia</strain>
    </source>
</reference>
<feature type="chain" id="PRO_0000196759" description="Uncharacterized mitochondrial protein AtMg00170/AtMg00620">
    <location>
        <begin position="1"/>
        <end position="139"/>
    </location>
</feature>
<feature type="transmembrane region" description="Helical" evidence="1">
    <location>
        <begin position="77"/>
        <end position="97"/>
    </location>
</feature>
<feature type="sequence conflict" description="In Ref. 3; AAM15164/AAM15502 and 4; AEC06104." evidence="2" ref="3 4">
    <original>S</original>
    <variation>L</variation>
    <location>
        <position position="19"/>
    </location>
</feature>
<accession>P94024</accession>
<accession>Q1PF87</accession>
<accession>Q27GL7</accession>
<accession>Q8RUI2</accession>
<gene>
    <name evidence="4" type="ordered locus">AtMg00170</name>
</gene>
<gene>
    <name evidence="5" type="ordered locus">AtMg00620</name>
</gene>
<gene>
    <name evidence="3" type="ordered locus">At2g07722</name>
</gene>
<proteinExistence type="predicted"/>
<evidence type="ECO:0000255" key="1"/>
<evidence type="ECO:0000305" key="2"/>
<evidence type="ECO:0000312" key="3">
    <source>
        <dbReference type="Araport" id="AT2G07722"/>
    </source>
</evidence>
<evidence type="ECO:0000312" key="4">
    <source>
        <dbReference type="Araport" id="ATMG00170"/>
    </source>
</evidence>
<evidence type="ECO:0000312" key="5">
    <source>
        <dbReference type="Araport" id="ATMG00620"/>
    </source>
</evidence>
<protein>
    <recommendedName>
        <fullName>Uncharacterized mitochondrial protein AtMg00170/AtMg00620</fullName>
    </recommendedName>
    <alternativeName>
        <fullName>ORF139b/ORF139a</fullName>
    </alternativeName>
</protein>
<comment type="subcellular location">
    <subcellularLocation>
        <location evidence="2">Mitochondrion membrane</location>
        <topology evidence="2">Single-pass membrane protein</topology>
    </subcellularLocation>
</comment>
<comment type="miscellaneous">
    <text>A stretch of 270 kb of the mitochondrial genome is duplicated within the centromere of chromosome 2 resulting in the duplication of the gene. The expression of this duplicated gene (At2g07722) is not demonstrated.</text>
</comment>
<dbReference type="EMBL" id="Y08501">
    <property type="protein sequence ID" value="CAA69762.1"/>
    <property type="molecule type" value="Genomic_DNA"/>
</dbReference>
<dbReference type="EMBL" id="Y08501">
    <property type="protein sequence ID" value="CAA69746.1"/>
    <property type="molecule type" value="Genomic_DNA"/>
</dbReference>
<dbReference type="EMBL" id="BK010421">
    <property type="status" value="NOT_ANNOTATED_CDS"/>
    <property type="molecule type" value="Genomic_DNA"/>
</dbReference>
<dbReference type="EMBL" id="AC006225">
    <property type="protein sequence ID" value="AAM15164.1"/>
    <property type="molecule type" value="Genomic_DNA"/>
</dbReference>
<dbReference type="EMBL" id="AC007729">
    <property type="protein sequence ID" value="AAM15502.1"/>
    <property type="molecule type" value="Genomic_DNA"/>
</dbReference>
<dbReference type="EMBL" id="CP002685">
    <property type="protein sequence ID" value="AEC06104.1"/>
    <property type="molecule type" value="Genomic_DNA"/>
</dbReference>
<dbReference type="EMBL" id="DQ446478">
    <property type="protein sequence ID" value="ABE65433.1"/>
    <property type="molecule type" value="Genomic_DNA"/>
</dbReference>
<dbReference type="RefSeq" id="NP_085488.1">
    <property type="nucleotide sequence ID" value="NC_001284.2"/>
</dbReference>
<dbReference type="RefSeq" id="NP_085522.1">
    <property type="nucleotide sequence ID" value="NC_001284.2"/>
</dbReference>
<dbReference type="RefSeq" id="NP_178801.1">
    <property type="nucleotide sequence ID" value="NM_126759.1"/>
</dbReference>
<dbReference type="STRING" id="3702.P94024"/>
<dbReference type="GlyGen" id="P94024">
    <property type="glycosylation" value="1 site"/>
</dbReference>
<dbReference type="PaxDb" id="3702-ATMG00170.1"/>
<dbReference type="EnsemblPlants" id="ATMG00170.1">
    <property type="protein sequence ID" value="ATMG00170.1"/>
    <property type="gene ID" value="ATMG00170"/>
</dbReference>
<dbReference type="EnsemblPlants" id="ATMG00620.1">
    <property type="protein sequence ID" value="ATMG00620.1"/>
    <property type="gene ID" value="ATMG00620"/>
</dbReference>
<dbReference type="GeneID" id="815395"/>
<dbReference type="Gramene" id="ATMG00170.1">
    <property type="protein sequence ID" value="ATMG00170.1"/>
    <property type="gene ID" value="ATMG00170"/>
</dbReference>
<dbReference type="Gramene" id="ATMG00620.1">
    <property type="protein sequence ID" value="ATMG00620.1"/>
    <property type="gene ID" value="ATMG00620"/>
</dbReference>
<dbReference type="KEGG" id="ath:AT2G07722"/>
<dbReference type="Araport" id="AT2G07722"/>
<dbReference type="Araport" id="ATMG00170"/>
<dbReference type="Araport" id="ATMG00620"/>
<dbReference type="TAIR" id="AT2G07722"/>
<dbReference type="TAIR" id="ATMG00170">
    <property type="gene designation" value="ORF139A"/>
</dbReference>
<dbReference type="TAIR" id="ATMG00620">
    <property type="gene designation" value="ORF139B"/>
</dbReference>
<dbReference type="eggNOG" id="ENOG502SGQW">
    <property type="taxonomic scope" value="Eukaryota"/>
</dbReference>
<dbReference type="HOGENOM" id="CLU_1847862_0_0_1"/>
<dbReference type="InParanoid" id="P94024"/>
<dbReference type="PRO" id="PR:P94024"/>
<dbReference type="Proteomes" id="UP000006548">
    <property type="component" value="Chromosome 2"/>
</dbReference>
<dbReference type="Proteomes" id="UP000006548">
    <property type="component" value="Mitochondrion MT"/>
</dbReference>
<dbReference type="GO" id="GO:0031966">
    <property type="term" value="C:mitochondrial membrane"/>
    <property type="evidence" value="ECO:0007669"/>
    <property type="project" value="UniProtKB-SubCell"/>
</dbReference>
<geneLocation type="mitochondrion"/>
<sequence>MIQRTRNQSIMLSLPSNQSANHAILTFQPIGQSRYLLTFQPTPSIPLLQQYIISVPYLDAYSSICFPVMARIRSAKYCFFFFLVLFLNGIIATRGKAMLPTLPQKGAAFFPPKMPVPPSGPSKQHNSAPRSDFVQFFYM</sequence>
<name>M170_ARATH</name>
<organism>
    <name type="scientific">Arabidopsis thaliana</name>
    <name type="common">Mouse-ear cress</name>
    <dbReference type="NCBI Taxonomy" id="3702"/>
    <lineage>
        <taxon>Eukaryota</taxon>
        <taxon>Viridiplantae</taxon>
        <taxon>Streptophyta</taxon>
        <taxon>Embryophyta</taxon>
        <taxon>Tracheophyta</taxon>
        <taxon>Spermatophyta</taxon>
        <taxon>Magnoliopsida</taxon>
        <taxon>eudicotyledons</taxon>
        <taxon>Gunneridae</taxon>
        <taxon>Pentapetalae</taxon>
        <taxon>rosids</taxon>
        <taxon>malvids</taxon>
        <taxon>Brassicales</taxon>
        <taxon>Brassicaceae</taxon>
        <taxon>Camelineae</taxon>
        <taxon>Arabidopsis</taxon>
    </lineage>
</organism>